<sequence length="9439" mass="1050738">MSGTLHNTVGSGILPYQQEIRIKLTSNEPIKDSEWSITGYPNTLTLQNAVGRTNNATEKNLALVGHIDPGNYFITVKFGDKVEQFEIRSKPTPPRIITTANELRGNSNHKPEIRVTDIPNDTTAKIKLVMGGTDGDHDPEINPYTVPENYTVVAEAYHDNDPSKNGVLTFRSSDYLKDLPLSGELKAIVYYNQYVQSNFSNSVPFSSDTTPPTINEPAGLVHKYYRGDHVEITLPVTDNTGGSGLRDVNVNLPQGWTKTFTINPNNNTEGTLKLIGNIPSNEAYNTTYHFNITATDNSGNTTNPAKTFILNVGKLADDLNPVGLSRDQLQLVTDPSSLSNSEREEVKRKISEANANIRSYLLQNNPILAGVNGDVTFYYRDGSVDVIDAENVITYEPERKSIFSENGNTNKKEAVITIARGQNYTIGPNLRKYFSLSNGSDLPNRDFTSISAIGSLPSSSEISRLNVGNYNYRVNAKNAYHKTQQELNLKLKIVEVNAPTGNNRVYRVSTYNLTNDEINKIKQAFKAANSGLNLNDNDITVSNNFDHRNVSSVTVTIRKGDLIKEFSSNLNNMNFLRWVNIRDDYTISWTSSKIQGRNTDGGLEWSPDHKSLIYKYDATLGRQINTNDVLTLLQATAKNSNLRSNINSNEKQLAERGSNGYSKSIIRDDGEKSYLLNSNPIQVLDLVEPDNGYGGRQVSHSNVIYNEKNSSIVNGQVPEANGASAFNIDKVVKANAANNGIMGVIYKAQLYLAPYSPKGYIEKLGQNLSNTNNVINVYFVPSDKVNPSITVGNYDHHTVYSGETFKNTINVNDNYGLNTVASTSDSAITMTRNNNELVGQAPNVTNSTNKIVKVKATDKSGNESIVSFTVNIKPLNEKYRITTSSSNQTPVRISNIQNNANLSIEDQNRVKSSLSMTKILGTRNYVNESNNDVRSQVVSKVNRSGNNATVNVTTTFSDGTTNTITVPVKHVLLEVVPTTRTTVRGQQFPTGKGTSPNDFFSLRTGGPVDARIVWVNNQGPDINSNQIGRDLTLHAEIFFDGETTPIRKDTTYKLSQSIPKQIYETTINGRFNSSGDAYPGNFVQAVNQYWPEHMDFRWAQGSGTPSSRNAGSFTKTVTVVYQNGQTENVNVLFKVKPNKPVIDSNSVISKGQLNGQQILVRNVPQNAQVTLYQSNGTVIPNTNTTIDSNGIATVTIQGTLPTGNITAKTSMTNNVTYTKQNSSGIASNTTEDISVFSENSDQVNVTAGMQAKNDGIKIIKGTNYNFNDFNSFISNIPAHSTLTWNEEPNSWKNNIGTTTKTVTVTLPNHQGTRTVDIPITIYPTVTAKNPVRDQKGRNLTNGTDVYNYIIFENNNRLGGTASWKDNRQPDKNIAGVQNLIALVNYPGISTPLEVPVKVWVYNFDFTQPIYKIQVGDTFPKGTWAGYYKHLENGEGLPIDGWKFYWNQQSTGTTSDQWQSLAYTRTPFVKTGTYDVVNPSNWGVWQTSQSAKFIVTNAKPNQPTITQSKTGDVTVTPGAVRNILISGTNDYIQASADKIVINKNGNKLTTFVKNNDGRWTVETGSPDINGIGPTNNGTAISLSRLAVRPGDSIEAIATEGSGETISTSATSEIYIVKAPQPEQVATHTYDNGTFDILPDNSRNSLNPTERVEINYTEKLNGNETQKSFTITKNNNGKWTINNKPNYVEFNQDNGKVVFSANTIKPNSQITITPKAGQGNTENTNPTVIQAPAQHTLTINEIVKEQGQNVTNDDINNAVQVPNKNRVAIKQGNALPTNLAGGSTSHIPVVIYYSDGSSEEATETVRTKVNKTELINARRRLDEEISKENKTPSSIRNFDQAMNRAQSQINTAKSDADQVIGTEFATPQQVNSALSKVQAAQNKINEAKALLQNKADNSQLVRAKEQLQQSIQPAASTDGMTQDSTRNYKNKRQAAEQAIQHANSVINNGDATSQQINDAKNTVEQAQRDYVEAKSNLRADKSQLQSAYDTLNRDVLTNDKKPASVRRYNEAISNIRKELDTAKADASSTLRNTNPSVEQVRDALNKINTVQPKVNQAIALLQPKENNSELVQAKKRLQDAVNDIPQTQGMTQQTINNYNDKQREAERALTSAQRVIDNGDATTQEITSEKSKVEQAMQALTNAKSNLRADKNELQTAYNKLIENVSTNGKKPASIRQYETAKARIQNQINDAKNEAERILGNDNPQVSQVTQALNKIKAIQPKLTEAINMLQNKENNTELVNAKNRLENAVNDTDPTHGMTQETINNYNAKKREAQNEIQKANMIINNGDATAQDISSEKSKVEQVLQALQNAKNDLRADKRELQTAYNKLIQNVNTNGKKPSSIQNYKSARRNIENQYNTAKNEAHNVLENTNPTVNAVEDALRKINAIQPEVTKAINILQDKEDNSELVRAKEKLDQAINSQPSLNGMTQESINNYTTKRREAQNIASSADTIINNGDASIEQITENKIRVEEATNALNEAKQHLTADTTSLKTEVRKLSRRGDTNNKKPSSVSAYNNTIHSLQSEITQTENRANTIINKPIRSVEEVNNALHEVNQLNQRLTDTINLLQPLANKESLKEARNRLESKINETVQTDGMTQQSVENYKQAKIKAQNESSIAQTLINNGDASDQEVSTEIEKLNQKLSELTNSINHLTVNKEPLETAKNQLQANIDQKPSTDGMTQQSVQSYERKLQEAKDKINSINNVLANNPDVNAIRTNKVETEQINNELTQAKQGLTVDKQPLINAKTALQQSLDNQPSTTGMTEATIQNYNAKRQKAEQVIQNANKIIENAQPSVQQVSDEKSKVEQALSELNNAKSALRADKQELQQAYNQLIQPTDLNNKKPASITAYNQRYQQFSNELNSTKTNTDRILKEQNPSVADVNNALNKVREVQQKLNEARALLQNKEDNSALVRAKEQLQQAVDQVPSTEGMTQQTKDDYNSKQQAAQQEISKAQQVIDNGDATTQQISNAKTNVERALEALNNAKTGLRADKEELQNAYNQLTQNIDTSGKTPASIRKYNEAKSRIQTQIDSAKNEANSILTNDNPQVSQVTAALNKIKAVQPELDKAIAMLKNKENNNALVQAKQQLQQIVNEVDPTQGMTTDTANNYKSKKREAEDEIQKAQQIINNGDATEQQITNETNRVNQAINAINKAKNDLRADKSQLENAYNQLIQNVDTNGKKPASIQQYQAARQAIETQYNNAKSEAHQILENSNPSVNEVAQALQKVEAVQLKVNDAIHILQNKENNSALVTAKNQLQQSVNDQPLTTGMTQDSINNYEAKRNEAQSAIRNAEAVINNGDATAKQISDEKSKVEQALAHLNDAKQQLTADTTELQTAVQQLNRRGDTNNKKPRSINAYNKAIQSLETQITSAKDNANAVIQKPIRTVQEVNNALQQVNQLNQQLTEAINQLQPLSNNDALKAARLNLENKINQTVQTDGMTQQSIEAYQNAKRVAQNESNTALALINNGDADEQQITTETDRVNQQTTNLTQAINGLTVNKEPLETAKTALQNNIDQVPSTDGMTQQSVANYNQKLQIAKNEINTINNVLANNPDVNAIKTNKAEAERISNDLTQAKNNLQVDTQPLEKIKRQLQDEIDQGTNTDGMTQDSVDNYNDSLSAAIIEKGKVNKLLKRNPTVEQVKESVANAQQVIQDLQNARTSLVPDKTQLQEAKNRLENSINQQTDTDGMTQDSLNNYNDKLAKARQNLEKISKVLGGQPTVAEIRQNTDEANAHKQALDTARSQLTLNREPYINHINNESHLNNAQKDNFKAQVNSAPNHNTLETIKNKADTLNQSMTALSESIADYENQKQQENYLDASNNKRQDYDNAVNAAKGILNQTQSPTMSADVIDQKAEDVKRTKTALDGNQRLEVAKQQALNHLNTLNDLNDAQRQTLTDTINHSPNINSVNQAKEKANTVNTAMTQLKQTIANYDDELHDGNYINADKDKKDAYNNAVNNAKQLINQSDANQAQLDPAEINKVTQRVNTTKNDLNGNDKLAEAKRDANTTIDGLTYLNEAQRNKAKENVGKASTKTNITSQLQDYNQLNIAMQALRNSVNDVNNVKANSNYINEDNGPKEAYNQAVTHAQTLINAQSNPEMSRDVVNQKTQAVNTAHQNLHGQQKLEQAQSSANTEIGNLPNLTNTQKAKEKELVNSKQTRTEVQEQLNQAKSLDSSMGTLKSLVAKQPTVQKTSVYINEDQPEQSAYNDSITMGQTIINKTADPVLDKTLVDNAISNISTKENALHGEQKLTTAKTEAINALNTLADLNTPQKEAIKTAINTAHTRTDVTAEQSKANQINSAMHTLRQNISDNESVTNESNYINAEPEKQHAFTEALNNAKEIVNEQQATLDANSINQKAQAILTTKNALDGEEQLRRAKENADQEINTLNQLTDAQRNSEKGLVNSSQTRTEVASQLAKAKELNKVMEQLNHLINGKNQMINSSKFINEDANQQQAYSNAIASAEALKNKSQNPELDKVTIEQAINNINSAINNLNGEAKLTKAKEDAVASINNLSGLTNEQKPKENQAVNGAQTRDQVANKLRDAEALDQSMQTLRDLVNNQNAIHSTSNYFNEDSTQKNTYDNAIDNGSTYITGQHNPELNKSTIDQTISRINTAKNDLHGVEKLQRDKGTANQEIGQLGYLNDPQKSGEESLVNGSNTRSEVEEHLNEAKSLNNAMKQLRDKVAEKTNVKQSSDYINDSTEHQRGYDQALQEAENIINEIGNPTLNKSEIEQKLQQLTDAQNALQGSHLLEEAKNNAITGINKLTALNDAQRQKAIENVQAQQTIPAVNQQLTLDREINTAMQALRDKVGQQNNVHQQSNYFNEDEQPKHNYDNSVQAGQTIIDKLQDPIMNKNEIEQAINQINTTQTALSGENKLHTDQESTNRQIEGLSSLNTAQINAEKDLVNQAKTRTDVAQKLAAAKEINSAMSNLRDGIQNKEDIKRSSAYINADPTKVTAYDQALQNAENIINATPNVELNKATIEQALSRVQQAQQDLDGVQQLANAKQQATQTVNGLNSLNDGQKRELNLLINSANTRTKVQEELNKATELNHAMEALRNSVQNVDQVKQSSNYVNEDQPEQHNYDNAVNEAQATINNNAQPVLDKLAIERLTQTVNTTKDALHGAQKLTQDQQAAETGIRGLTSLNEPQKNAEVAKVTAATTRDEVRNIRQEATTLDTAMLGLRKSIKDKNDTKNSSKYINEDHDQQQAYDNAVNNAQQVIDETQATLSSDTINQLANAVTQAKSNLHGDTKLQHDKDSAKQTIAQLQNLNSAQKHMEDSLIDNESTRTQVQHDLTEAQALDGLMGALKESIKDYTNIVSNGNYINAEPSKKQAYDAAVQNAQNIINGTNQPTINKGNVTTATQTVKNTKDALDGDHRLEEAKNNANQTIRNLSNLNNAQKDAEKNLVNSASTLEQVQQNLQTAQQLDNAMGELRQSIAKKDQVKADSKYLNEDPQIKQNYDDAVQRVETIINETQNPELLKANIDQATQSVQNAEQALHGAEKLNQDKQTSSTELDGLTDLTDAQREKLREQINTSNSRDDIKQKIEQAKALNDAMKKLKEQVAQKDGVHANSDYTNEDSAQKDAYNNALKQAEDIINNSSNPNLNAQDITNALNNIKQAQDNLHGAQKLQQDKNTTNQAIGNLNHLNQPQKDALIQAINGATSRDQVAEKLKEAEALDEAMKQLEDQVNQDDQISNSSPFINEDSDKQKTYNDKIQAAKEIINQTSNPTLDKQKIADTLQNIKDAVNNLHGDQKLAQSKQDANNQLNHLDDLTEEQKNHFKPLINNADTRDEVNKQLEIAKQLNGDMSTLHKVINDKDQIQHLSNYINADNDKKQNYDNAIKEAEDLIHNHPDTLDHKALQDLLNKIDQAHNELNGESRFKQALDNALNDIDSLNSLNVPQRQTVKDNINHVTTLESLAQELQKAKELNDAMKAMRDSIMNQEQIRKNSNYTNEDLAQQNAYNHAVDKINNIIGEDNATMDPQIIKQATQDINTAINGLNGDQKLQDAKTDAKQQITNFTGLTEPQKQALENIINQQTSRANVAKQLSHAKFLNGKMEELKVAVAKASLVRQNSNYINEDVSEKEAYEQAIAKGQEIINSENNPTISSTDINRTIQEINDAEQNLHGDNKLRQAQEIAKNEIQNLDGLNSAQITKLIQDIGRTTTKPAVTQKLEEAKAINQAMQQLKQSIADKDATLNSSNYLNEDSEKKLAYDNAVSQAEQLINQLNDPTMDISNIQAITQKVIQAKDSLHGANKLAQNQADSNLIINQSTNLNDKQKQALNDLINHAQTKQQVAEIIAQANKLNNEMGTLKTLVEEQSNVHQQSKYINEDPQVQNIYNDSIQKGREILNGTTDDVLNNNKIADAIQNIHLTKNDLHGDQKLQKAQQDATNELNYLTNLNNSQRQSEHDEINSAPSRTEVSNDLNHAKALNEAMRQLENEVALENSVKKLSDFINEDEAAQNEYSNALQKAKDIINGVPSSTLDKATIEDALLELQNARESLHGEQKLQEAKNQAVAEIDNLQALNPGQVLAEKTLVNQASTKPEVQEALQKAKELNEAMKALKTEINKKEQIKADSRYVNADSGLQANYNSALNYGSQIIATTQPPELNKDVINRATQTIKTAENNLNGQSKLAEAKSDGNQSIEHLQGLTQSQKDKQHDLINQAQTKQQVDDIVNNSKQLDNSMNQLQQIVNNDNTVKQNSDFINEDSSQQDAYNHAIQAAKDLITAHPTIMDKNQIDQAIENIKQALNDLHGSNKLSEDKKEASEQLQNLNSLTNGQKDTILNHIFSAPTRSQVGEKIASAKQLNNTMKALRDSIADNNEILQSSKYFNEDSEQQNAYNQAVNKAKNIINDQPTPVMANDEIQSVLNEVKQTKDNLHGDQKLANDKTDAQATLNALNYLNQAQRGNLETKVQNSNSRPEVQKVVQLANQLNDAMKKLDDALTGNDAIKQTSNYINEDTSQQVNFDEYTDRGKNIVAEQTNPNMSPTNINTIADKITEAKNDLHGVQKLKQAQQQSINTINQMTGLNQAQKEQLNQEIQQTQTRSEVHQVINKAQALNDSMNTLRQSITDEHEVKQTSNYINETVGNQTAYNNAVDRVKQIINQTSNPTMNPLEVERATSNVKISKDALHGERELNDNKNSKTFAVNHLDNLNQAQKEALTHEIEQATIVSQVNNIYNKAKALNNDMKKLKDIVAQQDNVRQSNNYINEDSTPQNMYNDTINHAQSIIDQVANPTMSHDEIENAINNIKHAINALDGEHKLQQAKENANLLINSLNDLNAPQRDAINRLVNEAQTREKVAEQLQSAQALNDAMKHLRNSIQNQSSVRQESKYINASDAKKEQYNHAVREVENIINEQHPTLDKEIIKQLTDGVNQANNDLNGVELLDADKQNAHQSIPTLMHLNQAQQNALNEKINNAVTRTEVAAIIGQAKLLDHAMENLEESIKDKEQVKQSSNYINEDSDVQETYDNAVDHVTEILNQTVNPTLSIEDIEHAINEVNQAKKQLRGKQKLYQTIDLADKELSKLDDLTSQQSSSISNQIYTAKTRTEVAQAIEKAKSLNHAMKALNKVYKNADKVLDSSRFINEDQPEKKAYQQAINHVDSIIHRQTNPEMDPTVINSITHELETAQNNLHGDQKLAHAQQDAANVINGLIHLNVAQREVMINTNTNATTREKVAKNLDNAQALDKAMETLQQVVAHKNNILNDSKYLNEDSKYQQQYDRVIADAEQLLNQTTNPTLEPYKVDIVKDNVLANEKILFGAEKLSYDKSNANDEIKHMNYLNNAQKQSIKDMISHAALRTEVKQLLQQAKILDEAMKSLEDKTQVVITDTTLPNYTEASEDKKEKVDQTVSHAQAIIDKINGSNVSLDQVRQALEQLTQASENLDGDQRVEEAKVHANQTIDQLTHLNSLQQQTAKESVKNATKLEEIATVSNNAQALNKVMGKLEQFINHADSVENSDNYRQADDDKIIAYDEALEHGQDIQKTNATQNETKQALQQLIYAETSLNGFERLNHARPRALEYIKSLEKINNAQKSALEDKVTQSHDLLELEHIVNEGTNLNDIMGELANAIVNNYAPTKASINYINADNLRKDNFTQAINNARDALNKTQGQNLDFNAIDTFKDDIFKTKDALNGIERLTAAKSKAEKLIDSLKFINKAQFTHANDEIINTNSIAQLSRIVNQAFDLNDAMKSLRDELNNQAFPVQASSNYINSDEDLKQQFDHALSNARKVLAKENGKNLDEKQIQGLKQVIEDTKDALNGIQRLSKAKAKAIQYVQSLSYINDAQRHIAENNIHNSDDLSSLANTLSKASDLDNAMKDLRDTIESNSTSVPNSVNYINADKNLQIEFDEALQQASATSSKTSENPATIEEVLGLSQAIYDTKNALNGEQRLATEKSKDLKLIKGLKDLNKAQLEDVTNKVNSANTLTELSQLTQSTLELNDKMKLLRDKLKTLVNPVKASLNYRNADYNLKRQFNKALKEAKGVLNKNSGTNVNINDIQHLLTQIDNAKDQLNGERRLKEHQQKSEVFIIKELDILNNAQKAAIINQIRASKDIKIINQIVDNAIELNDAMQGLKEHVAQLTATTKDNIEYLNADEDHKLQYDYAINLANNVLDKENGTNKDANIIIGMIQNMDDARALLNGIERLKDAQTKAHNDIKDTLKRQLDEIEHANATSNSKAQAKQMVNEEARKALSNINDATSNDLVNQAKDEGQSAIEHIHADELPKAKLDANQMIDQKVEDINHLISQNPNLSNEEKNKLISQINKLVNGIKNEIQQAINKQQIENATTKLDEVIETTKKLIIAKAEAKQMIKELSQKKRDAINNNTDLTPSQKAHALADIDKTEKDALQHIENSNSIDDINNNKEHAFNTLAHIIIWDTDQQPLVFELPELSLQNALVTSEVVVHRDETISLESIIGAMTLTDELKVNIVSLPNTDKVADHLTAKVKVILADGSYVTVNVPVKVVEKELQIAKKDAIKTIDVLVKQKIKDIDSNNELTSTQREDAKAEIERLKKQAIDKVNHSKSIKDIETVKRTDFEEIDQFDPKRFTLNKAKKDIITDVNTQIQNGFKEIETIKGLTSNEKTQFDKQLTALQKEFLEKVEHAHNLVELNQLQQEFNNRYKHILNQAHLLGEKHIAEHKLGYVVVNKTQQILNNQSASYFIKQWALDRIKQIQLETMNSIRGAHTVQDVHKALLQGIEQILKVNVSIINQSFNDSLHNFNYLHSKFDARLREKDVANHIVQTETFKEVLKGTGVEPGKINKETQQPKLHKNDNDSLFKHLVDNFGKTVGVITLTGLLSSFWLVLAKRRKKEEEEKQSIKNHHKDIRLSDTDKIDPIVITKRKIDKEEQIQNDDKHSIPVAKHKKSKEKQLSEEDIHSIPVVKRKQNSDNKDTKQKKVTSKKKKTPQSTKKVVKTKKRSKK</sequence>
<accession>Q5HPA2</accession>
<organism>
    <name type="scientific">Staphylococcus epidermidis (strain ATCC 35984 / DSM 28319 / BCRC 17069 / CCUG 31568 / BM 3577 / RP62A)</name>
    <dbReference type="NCBI Taxonomy" id="176279"/>
    <lineage>
        <taxon>Bacteria</taxon>
        <taxon>Bacillati</taxon>
        <taxon>Bacillota</taxon>
        <taxon>Bacilli</taxon>
        <taxon>Bacillales</taxon>
        <taxon>Staphylococcaceae</taxon>
        <taxon>Staphylococcus</taxon>
    </lineage>
</organism>
<comment type="subcellular location">
    <subcellularLocation>
        <location evidence="3">Cell membrane</location>
        <topology evidence="3">Single-pass membrane protein</topology>
    </subcellularLocation>
</comment>
<comment type="sequence caution" evidence="3">
    <conflict type="erroneous initiation">
        <sequence resource="EMBL-CDS" id="AAW55290"/>
    </conflict>
</comment>
<protein>
    <recommendedName>
        <fullName>Extracellular matrix-binding protein ebh</fullName>
    </recommendedName>
    <alternativeName>
        <fullName>ECM-binding protein homolog</fullName>
    </alternativeName>
</protein>
<proteinExistence type="evidence at protein level"/>
<evidence type="ECO:0000255" key="1"/>
<evidence type="ECO:0000256" key="2">
    <source>
        <dbReference type="SAM" id="MobiDB-lite"/>
    </source>
</evidence>
<evidence type="ECO:0000305" key="3"/>
<evidence type="ECO:0007829" key="4">
    <source>
        <dbReference type="PDB" id="6GV5"/>
    </source>
</evidence>
<evidence type="ECO:0007829" key="5">
    <source>
        <dbReference type="PDB" id="6GV8"/>
    </source>
</evidence>
<gene>
    <name type="primary">ebh</name>
    <name type="ordered locus">SERP1011</name>
</gene>
<reference key="1">
    <citation type="journal article" date="2005" name="J. Bacteriol.">
        <title>Insights on evolution of virulence and resistance from the complete genome analysis of an early methicillin-resistant Staphylococcus aureus strain and a biofilm-producing methicillin-resistant Staphylococcus epidermidis strain.</title>
        <authorList>
            <person name="Gill S.R."/>
            <person name="Fouts D.E."/>
            <person name="Archer G.L."/>
            <person name="Mongodin E.F."/>
            <person name="DeBoy R.T."/>
            <person name="Ravel J."/>
            <person name="Paulsen I.T."/>
            <person name="Kolonay J.F."/>
            <person name="Brinkac L.M."/>
            <person name="Beanan M.J."/>
            <person name="Dodson R.J."/>
            <person name="Daugherty S.C."/>
            <person name="Madupu R."/>
            <person name="Angiuoli S.V."/>
            <person name="Durkin A.S."/>
            <person name="Haft D.H."/>
            <person name="Vamathevan J.J."/>
            <person name="Khouri H."/>
            <person name="Utterback T.R."/>
            <person name="Lee C."/>
            <person name="Dimitrov G."/>
            <person name="Jiang L."/>
            <person name="Qin H."/>
            <person name="Weidman J."/>
            <person name="Tran K."/>
            <person name="Kang K.H."/>
            <person name="Hance I.R."/>
            <person name="Nelson K.E."/>
            <person name="Fraser C.M."/>
        </authorList>
    </citation>
    <scope>NUCLEOTIDE SEQUENCE [LARGE SCALE GENOMIC DNA]</scope>
    <source>
        <strain>ATCC 35984 / DSM 28319 / BCRC 17069 / CCUG 31568 / BM 3577 / RP62A</strain>
    </source>
</reference>
<keyword id="KW-0002">3D-structure</keyword>
<keyword id="KW-1003">Cell membrane</keyword>
<keyword id="KW-0472">Membrane</keyword>
<keyword id="KW-1185">Reference proteome</keyword>
<keyword id="KW-0677">Repeat</keyword>
<keyword id="KW-0812">Transmembrane</keyword>
<keyword id="KW-1133">Transmembrane helix</keyword>
<feature type="chain" id="PRO_0000345983" description="Extracellular matrix-binding protein ebh">
    <location>
        <begin position="1"/>
        <end position="9439"/>
    </location>
</feature>
<feature type="transmembrane region" description="Helical" evidence="1">
    <location>
        <begin position="9306"/>
        <end position="9324"/>
    </location>
</feature>
<feature type="domain" description="FIVAR 1">
    <location>
        <begin position="1815"/>
        <end position="1871"/>
    </location>
</feature>
<feature type="domain" description="FIVAR 2">
    <location>
        <begin position="1901"/>
        <end position="1957"/>
    </location>
</feature>
<feature type="domain" description="FIVAR 3">
    <location>
        <begin position="1985"/>
        <end position="2041"/>
    </location>
</feature>
<feature type="domain" description="FIVAR 4">
    <location>
        <begin position="2071"/>
        <end position="2127"/>
    </location>
</feature>
<feature type="domain" description="FIVAR 5">
    <location>
        <begin position="2155"/>
        <end position="2211"/>
    </location>
</feature>
<feature type="domain" description="FIVAR 6">
    <location>
        <begin position="2241"/>
        <end position="2297"/>
    </location>
</feature>
<feature type="domain" description="FIVAR 7">
    <location>
        <begin position="2325"/>
        <end position="2381"/>
    </location>
</feature>
<feature type="domain" description="FIVAR 8">
    <location>
        <begin position="2411"/>
        <end position="2467"/>
    </location>
</feature>
<feature type="domain" description="FIVAR 9">
    <location>
        <begin position="2488"/>
        <end position="2551"/>
    </location>
</feature>
<feature type="domain" description="FIVAR 10">
    <location>
        <begin position="2581"/>
        <end position="2638"/>
    </location>
</feature>
<feature type="domain" description="FIVAR 11">
    <location>
        <begin position="2665"/>
        <end position="2720"/>
    </location>
</feature>
<feature type="domain" description="FIVAR 12">
    <location>
        <begin position="2748"/>
        <end position="2804"/>
    </location>
</feature>
<feature type="domain" description="FIVAR 13">
    <location>
        <begin position="2832"/>
        <end position="2888"/>
    </location>
</feature>
<feature type="domain" description="FIVAR 14">
    <location>
        <begin position="2918"/>
        <end position="2974"/>
    </location>
</feature>
<feature type="domain" description="FIVAR 15">
    <location>
        <begin position="3002"/>
        <end position="3058"/>
    </location>
</feature>
<feature type="domain" description="FIVAR 16">
    <location>
        <begin position="3088"/>
        <end position="3144"/>
    </location>
</feature>
<feature type="domain" description="FIVAR 17">
    <location>
        <begin position="3172"/>
        <end position="3228"/>
    </location>
</feature>
<feature type="domain" description="FIVAR 18">
    <location>
        <begin position="3258"/>
        <end position="3314"/>
    </location>
</feature>
<feature type="domain" description="FIVAR 19">
    <location>
        <begin position="3335"/>
        <end position="3398"/>
    </location>
</feature>
<feature type="domain" description="FIVAR 20">
    <location>
        <begin position="3428"/>
        <end position="3484"/>
    </location>
</feature>
<feature type="domain" description="FIVAR 21">
    <location>
        <begin position="3512"/>
        <end position="3567"/>
    </location>
</feature>
<feature type="domain" description="FIVAR 22">
    <location>
        <begin position="3595"/>
        <end position="3650"/>
    </location>
</feature>
<feature type="domain" description="FIVAR 23">
    <location>
        <begin position="3678"/>
        <end position="3733"/>
    </location>
</feature>
<feature type="domain" description="FIVAR 24">
    <location>
        <begin position="3802"/>
        <end position="3860"/>
    </location>
</feature>
<feature type="domain" description="FIVAR 25">
    <location>
        <begin position="3928"/>
        <end position="3983"/>
    </location>
</feature>
<feature type="domain" description="FIVAR 26">
    <location>
        <begin position="4056"/>
        <end position="4114"/>
    </location>
</feature>
<feature type="domain" description="FIVAR 27">
    <location>
        <begin position="4182"/>
        <end position="4240"/>
    </location>
</feature>
<feature type="domain" description="FIVAR 28">
    <location>
        <begin position="4308"/>
        <end position="4365"/>
    </location>
</feature>
<feature type="domain" description="FIVAR 29">
    <location>
        <begin position="4433"/>
        <end position="4491"/>
    </location>
</feature>
<feature type="domain" description="FIVAR 30">
    <location>
        <begin position="4559"/>
        <end position="4617"/>
    </location>
</feature>
<feature type="domain" description="FIVAR 31">
    <location>
        <begin position="4685"/>
        <end position="4743"/>
    </location>
</feature>
<feature type="domain" description="FIVAR 32">
    <location>
        <begin position="4811"/>
        <end position="4869"/>
    </location>
</feature>
<feature type="domain" description="FIVAR 33">
    <location>
        <begin position="4937"/>
        <end position="4995"/>
    </location>
</feature>
<feature type="domain" description="FIVAR 34">
    <location>
        <begin position="5063"/>
        <end position="5115"/>
    </location>
</feature>
<feature type="domain" description="FIVAR 35">
    <location>
        <begin position="5189"/>
        <end position="5246"/>
    </location>
</feature>
<feature type="domain" description="FIVAR 36">
    <location>
        <begin position="5314"/>
        <end position="5372"/>
    </location>
</feature>
<feature type="domain" description="FIVAR 37">
    <location>
        <begin position="5440"/>
        <end position="5498"/>
    </location>
</feature>
<feature type="domain" description="FIVAR 38">
    <location>
        <begin position="5566"/>
        <end position="5624"/>
    </location>
</feature>
<feature type="domain" description="FIVAR 39">
    <location>
        <begin position="5692"/>
        <end position="5750"/>
    </location>
</feature>
<feature type="domain" description="FIVAR 40">
    <location>
        <begin position="5818"/>
        <end position="5875"/>
    </location>
</feature>
<feature type="domain" description="FIVAR 41">
    <location>
        <begin position="5943"/>
        <end position="6000"/>
    </location>
</feature>
<feature type="domain" description="FIVAR 42">
    <location>
        <begin position="6068"/>
        <end position="6126"/>
    </location>
</feature>
<feature type="domain" description="FIVAR 43">
    <location>
        <begin position="6194"/>
        <end position="6252"/>
    </location>
</feature>
<feature type="domain" description="FIVAR 44">
    <location>
        <begin position="6320"/>
        <end position="6378"/>
    </location>
</feature>
<feature type="domain" description="FIVAR 45">
    <location>
        <begin position="6446"/>
        <end position="6504"/>
    </location>
</feature>
<feature type="domain" description="FIVAR 46">
    <location>
        <begin position="6572"/>
        <end position="6630"/>
    </location>
</feature>
<feature type="domain" description="FIVAR 47">
    <location>
        <begin position="6698"/>
        <end position="6755"/>
    </location>
</feature>
<feature type="domain" description="FIVAR 48">
    <location>
        <begin position="6823"/>
        <end position="6877"/>
    </location>
</feature>
<feature type="domain" description="FIVAR 49">
    <location>
        <begin position="6949"/>
        <end position="7007"/>
    </location>
</feature>
<feature type="domain" description="FIVAR 50">
    <location>
        <begin position="7075"/>
        <end position="7133"/>
    </location>
</feature>
<feature type="domain" description="FIVAR 51">
    <location>
        <begin position="7201"/>
        <end position="7259"/>
    </location>
</feature>
<feature type="domain" description="FIVAR 52">
    <location>
        <begin position="7327"/>
        <end position="7384"/>
    </location>
</feature>
<feature type="domain" description="FIVAR 53">
    <location>
        <begin position="7452"/>
        <end position="7510"/>
    </location>
</feature>
<feature type="domain" description="FIVAR 54">
    <location>
        <begin position="7578"/>
        <end position="7636"/>
    </location>
</feature>
<feature type="domain" description="FIVAR 55">
    <location>
        <begin position="7704"/>
        <end position="7762"/>
    </location>
</feature>
<feature type="domain" description="FIVAR 56">
    <location>
        <begin position="7830"/>
        <end position="7888"/>
    </location>
</feature>
<feature type="domain" description="FIVAR 57">
    <location>
        <begin position="7956"/>
        <end position="8010"/>
    </location>
</feature>
<feature type="domain" description="FIVAR 58">
    <location>
        <begin position="8078"/>
        <end position="8137"/>
    </location>
</feature>
<feature type="domain" description="FIVAR 59">
    <location>
        <begin position="8205"/>
        <end position="8264"/>
    </location>
</feature>
<feature type="domain" description="FIVAR 60">
    <location>
        <begin position="8332"/>
        <end position="8391"/>
    </location>
</feature>
<feature type="domain" description="FIVAR 61">
    <location>
        <begin position="8459"/>
        <end position="8518"/>
    </location>
</feature>
<feature type="domain" description="FIVAR 62">
    <location>
        <begin position="8587"/>
        <end position="8643"/>
    </location>
</feature>
<feature type="region of interest" description="Disordered" evidence="2">
    <location>
        <begin position="2495"/>
        <end position="2514"/>
    </location>
</feature>
<feature type="region of interest" description="Disordered" evidence="2">
    <location>
        <begin position="2925"/>
        <end position="2951"/>
    </location>
</feature>
<feature type="region of interest" description="Disordered" evidence="2">
    <location>
        <begin position="4522"/>
        <end position="4542"/>
    </location>
</feature>
<feature type="region of interest" description="Disordered" evidence="2">
    <location>
        <begin position="4648"/>
        <end position="4671"/>
    </location>
</feature>
<feature type="region of interest" description="Disordered" evidence="2">
    <location>
        <begin position="5699"/>
        <end position="5719"/>
    </location>
</feature>
<feature type="region of interest" description="Disordered" evidence="2">
    <location>
        <begin position="6413"/>
        <end position="6434"/>
    </location>
</feature>
<feature type="region of interest" description="Disordered" evidence="2">
    <location>
        <begin position="9363"/>
        <end position="9439"/>
    </location>
</feature>
<feature type="compositionally biased region" description="Basic and acidic residues" evidence="2">
    <location>
        <begin position="2495"/>
        <end position="2507"/>
    </location>
</feature>
<feature type="compositionally biased region" description="Polar residues" evidence="2">
    <location>
        <begin position="2925"/>
        <end position="2938"/>
    </location>
</feature>
<feature type="compositionally biased region" description="Polar residues" evidence="2">
    <location>
        <begin position="5699"/>
        <end position="5712"/>
    </location>
</feature>
<feature type="compositionally biased region" description="Basic and acidic residues" evidence="2">
    <location>
        <begin position="9363"/>
        <end position="9375"/>
    </location>
</feature>
<feature type="compositionally biased region" description="Basic and acidic residues" evidence="2">
    <location>
        <begin position="9386"/>
        <end position="9395"/>
    </location>
</feature>
<feature type="compositionally biased region" description="Basic and acidic residues" evidence="2">
    <location>
        <begin position="9404"/>
        <end position="9413"/>
    </location>
</feature>
<feature type="compositionally biased region" description="Basic residues" evidence="2">
    <location>
        <begin position="9414"/>
        <end position="9439"/>
    </location>
</feature>
<feature type="helix" evidence="5">
    <location>
        <begin position="1810"/>
        <end position="1819"/>
    </location>
</feature>
<feature type="helix" evidence="5">
    <location>
        <begin position="1830"/>
        <end position="1859"/>
    </location>
</feature>
<feature type="helix" evidence="5">
    <location>
        <begin position="1865"/>
        <end position="1886"/>
    </location>
</feature>
<feature type="helix" evidence="5">
    <location>
        <begin position="1896"/>
        <end position="1908"/>
    </location>
</feature>
<feature type="helix" evidence="5">
    <location>
        <begin position="1922"/>
        <end position="1944"/>
    </location>
</feature>
<feature type="helix" evidence="5">
    <location>
        <begin position="1951"/>
        <end position="1972"/>
    </location>
</feature>
<feature type="helix" evidence="4">
    <location>
        <begin position="6014"/>
        <end position="6030"/>
    </location>
</feature>
<feature type="strand" evidence="4">
    <location>
        <begin position="6032"/>
        <end position="6034"/>
    </location>
</feature>
<feature type="helix" evidence="4">
    <location>
        <begin position="6036"/>
        <end position="6047"/>
    </location>
</feature>
<feature type="helix" evidence="4">
    <location>
        <begin position="6052"/>
        <end position="6077"/>
    </location>
</feature>
<feature type="helix" evidence="4">
    <location>
        <begin position="6079"/>
        <end position="6085"/>
    </location>
</feature>
<feature type="helix" evidence="4">
    <location>
        <begin position="6088"/>
        <end position="6090"/>
    </location>
</feature>
<feature type="helix" evidence="4">
    <location>
        <begin position="6093"/>
        <end position="6111"/>
    </location>
</feature>
<feature type="helix" evidence="4">
    <location>
        <begin position="6120"/>
        <end position="6135"/>
    </location>
</feature>
<dbReference type="EMBL" id="CP000029">
    <property type="protein sequence ID" value="AAW55290.1"/>
    <property type="status" value="ALT_INIT"/>
    <property type="molecule type" value="Genomic_DNA"/>
</dbReference>
<dbReference type="PDB" id="6GV5">
    <property type="method" value="X-ray"/>
    <property type="resolution" value="1.55 A"/>
    <property type="chains" value="A=6013-6138"/>
</dbReference>
<dbReference type="PDB" id="6GV8">
    <property type="method" value="X-ray"/>
    <property type="resolution" value="1.39 A"/>
    <property type="chains" value="A=1805-1974"/>
</dbReference>
<dbReference type="PDBsum" id="6GV5"/>
<dbReference type="PDBsum" id="6GV8"/>
<dbReference type="SASBDB" id="Q5HPA2"/>
<dbReference type="SMR" id="Q5HPA2"/>
<dbReference type="STRING" id="176279.SERP1011"/>
<dbReference type="KEGG" id="ser:SERP1011"/>
<dbReference type="eggNOG" id="COG1196">
    <property type="taxonomic scope" value="Bacteria"/>
</dbReference>
<dbReference type="eggNOG" id="COG1511">
    <property type="taxonomic scope" value="Bacteria"/>
</dbReference>
<dbReference type="eggNOG" id="COG4372">
    <property type="taxonomic scope" value="Bacteria"/>
</dbReference>
<dbReference type="HOGENOM" id="CLU_222673_0_0_9"/>
<dbReference type="Proteomes" id="UP000000531">
    <property type="component" value="Chromosome"/>
</dbReference>
<dbReference type="GO" id="GO:0005886">
    <property type="term" value="C:plasma membrane"/>
    <property type="evidence" value="ECO:0007669"/>
    <property type="project" value="UniProtKB-SubCell"/>
</dbReference>
<dbReference type="Gene3D" id="3.10.20.890">
    <property type="match status" value="1"/>
</dbReference>
<dbReference type="Gene3D" id="1.20.120.1850">
    <property type="entry name" value="Ebh helix bundles repeating unit (S and A modules)"/>
    <property type="match status" value="22"/>
</dbReference>
<dbReference type="Gene3D" id="1.20.5.420">
    <property type="entry name" value="Immunoglobulin FC, subunit C"/>
    <property type="match status" value="36"/>
</dbReference>
<dbReference type="InterPro" id="IPR011439">
    <property type="entry name" value="DUF1542"/>
</dbReference>
<dbReference type="InterPro" id="IPR026361">
    <property type="entry name" value="Ebh_dom"/>
</dbReference>
<dbReference type="InterPro" id="IPR051197">
    <property type="entry name" value="ECM-binding_protein"/>
</dbReference>
<dbReference type="InterPro" id="IPR020840">
    <property type="entry name" value="Extracell_matrix-bd_GA"/>
</dbReference>
<dbReference type="InterPro" id="IPR002988">
    <property type="entry name" value="GA_module"/>
</dbReference>
<dbReference type="InterPro" id="IPR009063">
    <property type="entry name" value="Ig/albumin-bd_sf"/>
</dbReference>
<dbReference type="NCBIfam" id="TIGR04264">
    <property type="entry name" value="hyperosmo_Ebh"/>
    <property type="match status" value="1"/>
</dbReference>
<dbReference type="PANTHER" id="PTHR33150">
    <property type="entry name" value="EXTRACELLULAR MATRIX-BINDING PROTEIN EBH"/>
    <property type="match status" value="1"/>
</dbReference>
<dbReference type="PANTHER" id="PTHR33150:SF1">
    <property type="entry name" value="EXTRACELLULAR MATRIX-BINDING PROTEIN EBH"/>
    <property type="match status" value="1"/>
</dbReference>
<dbReference type="Pfam" id="PF07564">
    <property type="entry name" value="DUF1542"/>
    <property type="match status" value="5"/>
</dbReference>
<dbReference type="Pfam" id="PF07554">
    <property type="entry name" value="FIVAR"/>
    <property type="match status" value="56"/>
</dbReference>
<dbReference type="Pfam" id="PF01468">
    <property type="entry name" value="GA"/>
    <property type="match status" value="21"/>
</dbReference>
<dbReference type="SMART" id="SM00844">
    <property type="entry name" value="GA"/>
    <property type="match status" value="39"/>
</dbReference>
<dbReference type="SUPFAM" id="SSF46997">
    <property type="entry name" value="Bacterial immunoglobulin/albumin-binding domains"/>
    <property type="match status" value="74"/>
</dbReference>
<name>EBH_STAEQ</name>